<reference key="1">
    <citation type="submission" date="2005-08" db="EMBL/GenBank/DDBJ databases">
        <title>Complete sequence of Chlorobium chlorochromatii CaD3.</title>
        <authorList>
            <consortium name="US DOE Joint Genome Institute"/>
            <person name="Copeland A."/>
            <person name="Lucas S."/>
            <person name="Lapidus A."/>
            <person name="Barry K."/>
            <person name="Detter J.C."/>
            <person name="Glavina T."/>
            <person name="Hammon N."/>
            <person name="Israni S."/>
            <person name="Pitluck S."/>
            <person name="Bryant D."/>
            <person name="Schmutz J."/>
            <person name="Larimer F."/>
            <person name="Land M."/>
            <person name="Kyrpides N."/>
            <person name="Ivanova N."/>
            <person name="Richardson P."/>
        </authorList>
    </citation>
    <scope>NUCLEOTIDE SEQUENCE [LARGE SCALE GENOMIC DNA]</scope>
    <source>
        <strain>CaD3</strain>
    </source>
</reference>
<dbReference type="EC" id="6.3.2.4" evidence="2"/>
<dbReference type="EMBL" id="CP000108">
    <property type="protein sequence ID" value="ABB28170.1"/>
    <property type="molecule type" value="Genomic_DNA"/>
</dbReference>
<dbReference type="SMR" id="Q3AS55"/>
<dbReference type="STRING" id="340177.Cag_0905"/>
<dbReference type="KEGG" id="cch:Cag_0905"/>
<dbReference type="eggNOG" id="COG1181">
    <property type="taxonomic scope" value="Bacteria"/>
</dbReference>
<dbReference type="HOGENOM" id="CLU_039268_0_0_10"/>
<dbReference type="OrthoDB" id="9813261at2"/>
<dbReference type="UniPathway" id="UPA00219"/>
<dbReference type="GO" id="GO:0005829">
    <property type="term" value="C:cytosol"/>
    <property type="evidence" value="ECO:0007669"/>
    <property type="project" value="TreeGrafter"/>
</dbReference>
<dbReference type="GO" id="GO:0005524">
    <property type="term" value="F:ATP binding"/>
    <property type="evidence" value="ECO:0007669"/>
    <property type="project" value="UniProtKB-KW"/>
</dbReference>
<dbReference type="GO" id="GO:0008716">
    <property type="term" value="F:D-alanine-D-alanine ligase activity"/>
    <property type="evidence" value="ECO:0007669"/>
    <property type="project" value="UniProtKB-UniRule"/>
</dbReference>
<dbReference type="GO" id="GO:0046872">
    <property type="term" value="F:metal ion binding"/>
    <property type="evidence" value="ECO:0007669"/>
    <property type="project" value="UniProtKB-KW"/>
</dbReference>
<dbReference type="GO" id="GO:0071555">
    <property type="term" value="P:cell wall organization"/>
    <property type="evidence" value="ECO:0007669"/>
    <property type="project" value="UniProtKB-KW"/>
</dbReference>
<dbReference type="GO" id="GO:0009252">
    <property type="term" value="P:peptidoglycan biosynthetic process"/>
    <property type="evidence" value="ECO:0007669"/>
    <property type="project" value="UniProtKB-UniRule"/>
</dbReference>
<dbReference type="GO" id="GO:0008360">
    <property type="term" value="P:regulation of cell shape"/>
    <property type="evidence" value="ECO:0007669"/>
    <property type="project" value="UniProtKB-KW"/>
</dbReference>
<dbReference type="FunFam" id="3.30.470.20:FF:000008">
    <property type="entry name" value="D-alanine--D-alanine ligase"/>
    <property type="match status" value="1"/>
</dbReference>
<dbReference type="Gene3D" id="3.40.50.20">
    <property type="match status" value="1"/>
</dbReference>
<dbReference type="Gene3D" id="3.30.1490.20">
    <property type="entry name" value="ATP-grasp fold, A domain"/>
    <property type="match status" value="1"/>
</dbReference>
<dbReference type="Gene3D" id="3.30.470.20">
    <property type="entry name" value="ATP-grasp fold, B domain"/>
    <property type="match status" value="1"/>
</dbReference>
<dbReference type="HAMAP" id="MF_00047">
    <property type="entry name" value="Dala_Dala_lig"/>
    <property type="match status" value="1"/>
</dbReference>
<dbReference type="InterPro" id="IPR011761">
    <property type="entry name" value="ATP-grasp"/>
</dbReference>
<dbReference type="InterPro" id="IPR013815">
    <property type="entry name" value="ATP_grasp_subdomain_1"/>
</dbReference>
<dbReference type="InterPro" id="IPR000291">
    <property type="entry name" value="D-Ala_lig_Van_CS"/>
</dbReference>
<dbReference type="InterPro" id="IPR005905">
    <property type="entry name" value="D_ala_D_ala"/>
</dbReference>
<dbReference type="InterPro" id="IPR011095">
    <property type="entry name" value="Dala_Dala_lig_C"/>
</dbReference>
<dbReference type="InterPro" id="IPR011127">
    <property type="entry name" value="Dala_Dala_lig_N"/>
</dbReference>
<dbReference type="InterPro" id="IPR016185">
    <property type="entry name" value="PreATP-grasp_dom_sf"/>
</dbReference>
<dbReference type="NCBIfam" id="TIGR01205">
    <property type="entry name" value="D_ala_D_alaTIGR"/>
    <property type="match status" value="1"/>
</dbReference>
<dbReference type="NCBIfam" id="NF002378">
    <property type="entry name" value="PRK01372.1"/>
    <property type="match status" value="1"/>
</dbReference>
<dbReference type="NCBIfam" id="NF002528">
    <property type="entry name" value="PRK01966.1-4"/>
    <property type="match status" value="1"/>
</dbReference>
<dbReference type="PANTHER" id="PTHR23132">
    <property type="entry name" value="D-ALANINE--D-ALANINE LIGASE"/>
    <property type="match status" value="1"/>
</dbReference>
<dbReference type="PANTHER" id="PTHR23132:SF25">
    <property type="entry name" value="D-ALANINE--D-ALANINE LIGASE A"/>
    <property type="match status" value="1"/>
</dbReference>
<dbReference type="Pfam" id="PF07478">
    <property type="entry name" value="Dala_Dala_lig_C"/>
    <property type="match status" value="1"/>
</dbReference>
<dbReference type="Pfam" id="PF01820">
    <property type="entry name" value="Dala_Dala_lig_N"/>
    <property type="match status" value="1"/>
</dbReference>
<dbReference type="PIRSF" id="PIRSF039102">
    <property type="entry name" value="Ddl/VanB"/>
    <property type="match status" value="1"/>
</dbReference>
<dbReference type="SUPFAM" id="SSF56059">
    <property type="entry name" value="Glutathione synthetase ATP-binding domain-like"/>
    <property type="match status" value="1"/>
</dbReference>
<dbReference type="SUPFAM" id="SSF52440">
    <property type="entry name" value="PreATP-grasp domain"/>
    <property type="match status" value="1"/>
</dbReference>
<dbReference type="PROSITE" id="PS50975">
    <property type="entry name" value="ATP_GRASP"/>
    <property type="match status" value="1"/>
</dbReference>
<dbReference type="PROSITE" id="PS00843">
    <property type="entry name" value="DALA_DALA_LIGASE_1"/>
    <property type="match status" value="1"/>
</dbReference>
<dbReference type="PROSITE" id="PS00844">
    <property type="entry name" value="DALA_DALA_LIGASE_2"/>
    <property type="match status" value="1"/>
</dbReference>
<protein>
    <recommendedName>
        <fullName evidence="2">D-alanine--D-alanine ligase</fullName>
        <ecNumber evidence="2">6.3.2.4</ecNumber>
    </recommendedName>
    <alternativeName>
        <fullName evidence="2">D-Ala-D-Ala ligase</fullName>
    </alternativeName>
    <alternativeName>
        <fullName evidence="2">D-alanylalanine synthetase</fullName>
    </alternativeName>
</protein>
<evidence type="ECO:0000250" key="1"/>
<evidence type="ECO:0000255" key="2">
    <source>
        <dbReference type="HAMAP-Rule" id="MF_00047"/>
    </source>
</evidence>
<accession>Q3AS55</accession>
<feature type="chain" id="PRO_1000030436" description="D-alanine--D-alanine ligase">
    <location>
        <begin position="1"/>
        <end position="360"/>
    </location>
</feature>
<feature type="domain" description="ATP-grasp" evidence="2">
    <location>
        <begin position="146"/>
        <end position="352"/>
    </location>
</feature>
<feature type="binding site" evidence="2">
    <location>
        <begin position="179"/>
        <end position="234"/>
    </location>
    <ligand>
        <name>ATP</name>
        <dbReference type="ChEBI" id="CHEBI:30616"/>
    </ligand>
</feature>
<feature type="binding site" evidence="2">
    <location>
        <position position="305"/>
    </location>
    <ligand>
        <name>Mg(2+)</name>
        <dbReference type="ChEBI" id="CHEBI:18420"/>
        <label>1</label>
    </ligand>
</feature>
<feature type="binding site" evidence="2">
    <location>
        <position position="319"/>
    </location>
    <ligand>
        <name>Mg(2+)</name>
        <dbReference type="ChEBI" id="CHEBI:18420"/>
        <label>1</label>
    </ligand>
</feature>
<feature type="binding site" evidence="2">
    <location>
        <position position="319"/>
    </location>
    <ligand>
        <name>Mg(2+)</name>
        <dbReference type="ChEBI" id="CHEBI:18420"/>
        <label>2</label>
    </ligand>
</feature>
<feature type="binding site" evidence="2">
    <location>
        <position position="321"/>
    </location>
    <ligand>
        <name>Mg(2+)</name>
        <dbReference type="ChEBI" id="CHEBI:18420"/>
        <label>2</label>
    </ligand>
</feature>
<gene>
    <name evidence="2" type="primary">ddl</name>
    <name type="ordered locus">Cag_0905</name>
</gene>
<sequence length="360" mass="38731">MSRTTVALFFGGQSAEHEISIISAQSIAAHLDTERFTLLPIYITHSGEWLCDGFARTLLTTNLASKLRGSSREETAAALQQMVRNAAQAPCNRNLAALGVDVAFLALHGSFGEDGRMQGFLETCGIPYTGCGVLASALTMDKALTKLCVADAGIAVAQGTNILSADYLANPNAVEASVEAQVSYPLFVKPASLGSSIGISKVHNREELHPALQAACALDWKVVVESTVKGREIEVAVLGNADPIASVCGEIEPGKEFYDFQDKYMGNSAKLFIPARIPESLQEEVRRSALTAYRALGCSGMARVDFFVDESTNSVVLNEVNTIPGFTDISMYPQMMEASGISYRNLITRLLELALEPLRR</sequence>
<comment type="function">
    <text evidence="2">Cell wall formation.</text>
</comment>
<comment type="catalytic activity">
    <reaction evidence="2">
        <text>2 D-alanine + ATP = D-alanyl-D-alanine + ADP + phosphate + H(+)</text>
        <dbReference type="Rhea" id="RHEA:11224"/>
        <dbReference type="ChEBI" id="CHEBI:15378"/>
        <dbReference type="ChEBI" id="CHEBI:30616"/>
        <dbReference type="ChEBI" id="CHEBI:43474"/>
        <dbReference type="ChEBI" id="CHEBI:57416"/>
        <dbReference type="ChEBI" id="CHEBI:57822"/>
        <dbReference type="ChEBI" id="CHEBI:456216"/>
        <dbReference type="EC" id="6.3.2.4"/>
    </reaction>
</comment>
<comment type="cofactor">
    <cofactor evidence="1">
        <name>Mg(2+)</name>
        <dbReference type="ChEBI" id="CHEBI:18420"/>
    </cofactor>
    <cofactor evidence="1">
        <name>Mn(2+)</name>
        <dbReference type="ChEBI" id="CHEBI:29035"/>
    </cofactor>
    <text evidence="1">Binds 2 magnesium or manganese ions per subunit.</text>
</comment>
<comment type="pathway">
    <text evidence="2">Cell wall biogenesis; peptidoglycan biosynthesis.</text>
</comment>
<comment type="subcellular location">
    <subcellularLocation>
        <location evidence="2">Cytoplasm</location>
    </subcellularLocation>
</comment>
<comment type="similarity">
    <text evidence="2">Belongs to the D-alanine--D-alanine ligase family.</text>
</comment>
<organism>
    <name type="scientific">Chlorobium chlorochromatii (strain CaD3)</name>
    <dbReference type="NCBI Taxonomy" id="340177"/>
    <lineage>
        <taxon>Bacteria</taxon>
        <taxon>Pseudomonadati</taxon>
        <taxon>Chlorobiota</taxon>
        <taxon>Chlorobiia</taxon>
        <taxon>Chlorobiales</taxon>
        <taxon>Chlorobiaceae</taxon>
        <taxon>Chlorobium/Pelodictyon group</taxon>
        <taxon>Chlorobium</taxon>
    </lineage>
</organism>
<keyword id="KW-0067">ATP-binding</keyword>
<keyword id="KW-0133">Cell shape</keyword>
<keyword id="KW-0961">Cell wall biogenesis/degradation</keyword>
<keyword id="KW-0963">Cytoplasm</keyword>
<keyword id="KW-0436">Ligase</keyword>
<keyword id="KW-0460">Magnesium</keyword>
<keyword id="KW-0464">Manganese</keyword>
<keyword id="KW-0479">Metal-binding</keyword>
<keyword id="KW-0547">Nucleotide-binding</keyword>
<keyword id="KW-0573">Peptidoglycan synthesis</keyword>
<name>DDL_CHLCH</name>
<proteinExistence type="inferred from homology"/>